<keyword id="KW-0066">ATP synthesis</keyword>
<keyword id="KW-0067">ATP-binding</keyword>
<keyword id="KW-1003">Cell membrane</keyword>
<keyword id="KW-0375">Hydrogen ion transport</keyword>
<keyword id="KW-0406">Ion transport</keyword>
<keyword id="KW-0472">Membrane</keyword>
<keyword id="KW-0547">Nucleotide-binding</keyword>
<keyword id="KW-1185">Reference proteome</keyword>
<keyword id="KW-1278">Translocase</keyword>
<keyword id="KW-0813">Transport</keyword>
<dbReference type="EC" id="7.1.2.2" evidence="1"/>
<dbReference type="EMBL" id="CP000682">
    <property type="protein sequence ID" value="ABP96057.1"/>
    <property type="molecule type" value="Genomic_DNA"/>
</dbReference>
<dbReference type="RefSeq" id="WP_012021844.1">
    <property type="nucleotide sequence ID" value="NZ_CP139956.1"/>
</dbReference>
<dbReference type="SMR" id="A4YI05"/>
<dbReference type="STRING" id="399549.Msed_1917"/>
<dbReference type="KEGG" id="mse:Msed_1917"/>
<dbReference type="eggNOG" id="arCOG00868">
    <property type="taxonomic scope" value="Archaea"/>
</dbReference>
<dbReference type="HOGENOM" id="CLU_008162_3_1_2"/>
<dbReference type="Proteomes" id="UP000000242">
    <property type="component" value="Chromosome"/>
</dbReference>
<dbReference type="GO" id="GO:0005886">
    <property type="term" value="C:plasma membrane"/>
    <property type="evidence" value="ECO:0007669"/>
    <property type="project" value="UniProtKB-SubCell"/>
</dbReference>
<dbReference type="GO" id="GO:0033178">
    <property type="term" value="C:proton-transporting two-sector ATPase complex, catalytic domain"/>
    <property type="evidence" value="ECO:0007669"/>
    <property type="project" value="InterPro"/>
</dbReference>
<dbReference type="GO" id="GO:0005524">
    <property type="term" value="F:ATP binding"/>
    <property type="evidence" value="ECO:0007669"/>
    <property type="project" value="UniProtKB-UniRule"/>
</dbReference>
<dbReference type="GO" id="GO:0046933">
    <property type="term" value="F:proton-transporting ATP synthase activity, rotational mechanism"/>
    <property type="evidence" value="ECO:0007669"/>
    <property type="project" value="UniProtKB-UniRule"/>
</dbReference>
<dbReference type="GO" id="GO:0046961">
    <property type="term" value="F:proton-transporting ATPase activity, rotational mechanism"/>
    <property type="evidence" value="ECO:0007669"/>
    <property type="project" value="InterPro"/>
</dbReference>
<dbReference type="GO" id="GO:0042777">
    <property type="term" value="P:proton motive force-driven plasma membrane ATP synthesis"/>
    <property type="evidence" value="ECO:0007669"/>
    <property type="project" value="UniProtKB-UniRule"/>
</dbReference>
<dbReference type="CDD" id="cd18111">
    <property type="entry name" value="ATP-synt_V_A-type_alpha_C"/>
    <property type="match status" value="1"/>
</dbReference>
<dbReference type="CDD" id="cd18119">
    <property type="entry name" value="ATP-synt_V_A-type_alpha_N"/>
    <property type="match status" value="1"/>
</dbReference>
<dbReference type="CDD" id="cd01134">
    <property type="entry name" value="V_A-ATPase_A"/>
    <property type="match status" value="1"/>
</dbReference>
<dbReference type="FunFam" id="1.10.1140.10:FF:000002">
    <property type="entry name" value="V-type proton ATPase catalytic subunit A"/>
    <property type="match status" value="1"/>
</dbReference>
<dbReference type="FunFam" id="2.40.30.20:FF:000002">
    <property type="entry name" value="V-type proton ATPase catalytic subunit A"/>
    <property type="match status" value="1"/>
</dbReference>
<dbReference type="FunFam" id="2.40.50.100:FF:000008">
    <property type="entry name" value="V-type proton ATPase catalytic subunit A"/>
    <property type="match status" value="1"/>
</dbReference>
<dbReference type="Gene3D" id="2.40.30.20">
    <property type="match status" value="1"/>
</dbReference>
<dbReference type="Gene3D" id="2.40.50.100">
    <property type="match status" value="1"/>
</dbReference>
<dbReference type="Gene3D" id="1.10.1140.10">
    <property type="entry name" value="Bovine Mitochondrial F1-atpase, Atp Synthase Beta Chain, Chain D, domain 3"/>
    <property type="match status" value="1"/>
</dbReference>
<dbReference type="Gene3D" id="3.40.50.300">
    <property type="entry name" value="P-loop containing nucleotide triphosphate hydrolases"/>
    <property type="match status" value="1"/>
</dbReference>
<dbReference type="HAMAP" id="MF_00309">
    <property type="entry name" value="ATP_synth_A_arch"/>
    <property type="match status" value="1"/>
</dbReference>
<dbReference type="InterPro" id="IPR055190">
    <property type="entry name" value="ATP-synt_VA_C"/>
</dbReference>
<dbReference type="InterPro" id="IPR031686">
    <property type="entry name" value="ATP-synth_a_Xtn"/>
</dbReference>
<dbReference type="InterPro" id="IPR023366">
    <property type="entry name" value="ATP_synth_asu-like_sf"/>
</dbReference>
<dbReference type="InterPro" id="IPR005726">
    <property type="entry name" value="ATP_synth_asu_arc"/>
</dbReference>
<dbReference type="InterPro" id="IPR004100">
    <property type="entry name" value="ATPase_F1/V1/A1_a/bsu_N"/>
</dbReference>
<dbReference type="InterPro" id="IPR036121">
    <property type="entry name" value="ATPase_F1/V1/A1_a/bsu_N_sf"/>
</dbReference>
<dbReference type="InterPro" id="IPR000194">
    <property type="entry name" value="ATPase_F1/V1/A1_a/bsu_nucl-bd"/>
</dbReference>
<dbReference type="InterPro" id="IPR024034">
    <property type="entry name" value="ATPase_F1/V1_b/a_C"/>
</dbReference>
<dbReference type="InterPro" id="IPR027417">
    <property type="entry name" value="P-loop_NTPase"/>
</dbReference>
<dbReference type="InterPro" id="IPR022878">
    <property type="entry name" value="V-ATPase_asu"/>
</dbReference>
<dbReference type="NCBIfam" id="TIGR01043">
    <property type="entry name" value="ATP_syn_A_arch"/>
    <property type="match status" value="1"/>
</dbReference>
<dbReference type="NCBIfam" id="NF003220">
    <property type="entry name" value="PRK04192.1"/>
    <property type="match status" value="1"/>
</dbReference>
<dbReference type="PANTHER" id="PTHR43607:SF1">
    <property type="entry name" value="H(+)-TRANSPORTING TWO-SECTOR ATPASE"/>
    <property type="match status" value="1"/>
</dbReference>
<dbReference type="PANTHER" id="PTHR43607">
    <property type="entry name" value="V-TYPE PROTON ATPASE CATALYTIC SUBUNIT A"/>
    <property type="match status" value="1"/>
</dbReference>
<dbReference type="Pfam" id="PF00006">
    <property type="entry name" value="ATP-synt_ab"/>
    <property type="match status" value="1"/>
</dbReference>
<dbReference type="Pfam" id="PF02874">
    <property type="entry name" value="ATP-synt_ab_N"/>
    <property type="match status" value="1"/>
</dbReference>
<dbReference type="Pfam" id="PF16886">
    <property type="entry name" value="ATP-synt_ab_Xtn"/>
    <property type="match status" value="1"/>
</dbReference>
<dbReference type="Pfam" id="PF22919">
    <property type="entry name" value="ATP-synt_VA_C"/>
    <property type="match status" value="1"/>
</dbReference>
<dbReference type="SUPFAM" id="SSF47917">
    <property type="entry name" value="C-terminal domain of alpha and beta subunits of F1 ATP synthase"/>
    <property type="match status" value="1"/>
</dbReference>
<dbReference type="SUPFAM" id="SSF50615">
    <property type="entry name" value="N-terminal domain of alpha and beta subunits of F1 ATP synthase"/>
    <property type="match status" value="1"/>
</dbReference>
<dbReference type="SUPFAM" id="SSF52540">
    <property type="entry name" value="P-loop containing nucleoside triphosphate hydrolases"/>
    <property type="match status" value="1"/>
</dbReference>
<gene>
    <name evidence="1" type="primary">atpA</name>
    <name type="ordered locus">Msed_1917</name>
</gene>
<name>AATA_METS5</name>
<feature type="chain" id="PRO_1000071991" description="A-type ATP synthase subunit A">
    <location>
        <begin position="1"/>
        <end position="591"/>
    </location>
</feature>
<feature type="binding site" evidence="1">
    <location>
        <begin position="233"/>
        <end position="240"/>
    </location>
    <ligand>
        <name>ATP</name>
        <dbReference type="ChEBI" id="CHEBI:30616"/>
    </ligand>
</feature>
<comment type="function">
    <text evidence="1">Component of the A-type ATP synthase that produces ATP from ADP in the presence of a proton gradient across the membrane. The A chain is the catalytic subunit.</text>
</comment>
<comment type="catalytic activity">
    <reaction evidence="1">
        <text>ATP + H2O + 4 H(+)(in) = ADP + phosphate + 5 H(+)(out)</text>
        <dbReference type="Rhea" id="RHEA:57720"/>
        <dbReference type="ChEBI" id="CHEBI:15377"/>
        <dbReference type="ChEBI" id="CHEBI:15378"/>
        <dbReference type="ChEBI" id="CHEBI:30616"/>
        <dbReference type="ChEBI" id="CHEBI:43474"/>
        <dbReference type="ChEBI" id="CHEBI:456216"/>
        <dbReference type="EC" id="7.1.2.2"/>
    </reaction>
</comment>
<comment type="subunit">
    <text evidence="1">Has multiple subunits with at least A(3), B(3), C, D, E, F, H, I and proteolipid K(x).</text>
</comment>
<comment type="subcellular location">
    <subcellularLocation>
        <location evidence="1">Cell membrane</location>
        <topology evidence="1">Peripheral membrane protein</topology>
    </subcellularLocation>
</comment>
<comment type="similarity">
    <text evidence="1">Belongs to the ATPase alpha/beta chains family.</text>
</comment>
<accession>A4YI05</accession>
<proteinExistence type="inferred from homology"/>
<reference key="1">
    <citation type="journal article" date="2008" name="Appl. Environ. Microbiol.">
        <title>The genome sequence of the metal-mobilizing, extremely thermoacidophilic archaeon Metallosphaera sedula provides insights into bioleaching-associated metabolism.</title>
        <authorList>
            <person name="Auernik K.S."/>
            <person name="Maezato Y."/>
            <person name="Blum P.H."/>
            <person name="Kelly R.M."/>
        </authorList>
    </citation>
    <scope>NUCLEOTIDE SEQUENCE [LARGE SCALE GENOMIC DNA]</scope>
    <source>
        <strain>ATCC 51363 / DSM 5348 / JCM 9185 / NBRC 15509 / TH2</strain>
    </source>
</reference>
<organism>
    <name type="scientific">Metallosphaera sedula (strain ATCC 51363 / DSM 5348 / JCM 9185 / NBRC 15509 / TH2)</name>
    <dbReference type="NCBI Taxonomy" id="399549"/>
    <lineage>
        <taxon>Archaea</taxon>
        <taxon>Thermoproteota</taxon>
        <taxon>Thermoprotei</taxon>
        <taxon>Sulfolobales</taxon>
        <taxon>Sulfolobaceae</taxon>
        <taxon>Metallosphaera</taxon>
    </lineage>
</organism>
<evidence type="ECO:0000255" key="1">
    <source>
        <dbReference type="HAMAP-Rule" id="MF_00309"/>
    </source>
</evidence>
<sequence length="591" mass="66130">MAQGKVARVNGPLVVAEGMKDAQMFEVVEVGEPRLVGEITRIEGDRAYIQVYEDTSGIRPGEPVFGSGAPLSVELGPGLLGQLFDGLLRPLGEIKEITKSPFIKRGIKLPTLNREKEWHFVPKMKKGDKVEPGDILGVVQETGLVEHRILVPPYVHGKLKEVVAEGDYKVEDNVAIVDMNGDEVPVKMMQKWPVRVPRPFKEKLDPSQPLLTGVRILDTIFPIAKGGTAAIPGPFGSGKTVTLQSLSKWSEAKIVIFVGCGERGNEMTDELRSFPKLKDPWTGRPLLERTVMVANTSNMPVAAREASIYVGVTLAEYFRDQGYDVLTVADSTSRWAEALRDLGGRMEEMPAEEGFPSYLSSRIAEYYERAGRVRTLGNPERYGSVTLASAVSPPGGDFTEPVTSTTLRFVRVFWPLDVSLAQARHYPAINWLQGFSSYVDLVSDWWIKNVDPDWRIMRDFMVRTLLREDELKQIVRLVGPESLAEKDKLTLEVARLIKEAFLKQNAYDDIDAFSSPQKQARIMKLIYHYNQYATNAVERGIPVKKIVDKITVVPDIIRSKATIKNNELQKYDELENKLKAQFDELLKEAGA</sequence>
<protein>
    <recommendedName>
        <fullName evidence="1">A-type ATP synthase subunit A</fullName>
        <ecNumber evidence="1">7.1.2.2</ecNumber>
    </recommendedName>
</protein>